<accession>Q5HF43</accession>
<reference key="1">
    <citation type="journal article" date="2005" name="J. Bacteriol.">
        <title>Insights on evolution of virulence and resistance from the complete genome analysis of an early methicillin-resistant Staphylococcus aureus strain and a biofilm-producing methicillin-resistant Staphylococcus epidermidis strain.</title>
        <authorList>
            <person name="Gill S.R."/>
            <person name="Fouts D.E."/>
            <person name="Archer G.L."/>
            <person name="Mongodin E.F."/>
            <person name="DeBoy R.T."/>
            <person name="Ravel J."/>
            <person name="Paulsen I.T."/>
            <person name="Kolonay J.F."/>
            <person name="Brinkac L.M."/>
            <person name="Beanan M.J."/>
            <person name="Dodson R.J."/>
            <person name="Daugherty S.C."/>
            <person name="Madupu R."/>
            <person name="Angiuoli S.V."/>
            <person name="Durkin A.S."/>
            <person name="Haft D.H."/>
            <person name="Vamathevan J.J."/>
            <person name="Khouri H."/>
            <person name="Utterback T.R."/>
            <person name="Lee C."/>
            <person name="Dimitrov G."/>
            <person name="Jiang L."/>
            <person name="Qin H."/>
            <person name="Weidman J."/>
            <person name="Tran K."/>
            <person name="Kang K.H."/>
            <person name="Hance I.R."/>
            <person name="Nelson K.E."/>
            <person name="Fraser C.M."/>
        </authorList>
    </citation>
    <scope>NUCLEOTIDE SEQUENCE [LARGE SCALE GENOMIC DNA]</scope>
    <source>
        <strain>COL</strain>
    </source>
</reference>
<reference key="2">
    <citation type="journal article" date="2003" name="Mol. Microbiol.">
        <title>Identification of a novel iron regulated staphylococcal surface protein with haptoglobin-haemoglobin binding activity.</title>
        <authorList>
            <person name="Dryla A."/>
            <person name="Gelbmann D."/>
            <person name="von Gabain A."/>
            <person name="Nagy E."/>
        </authorList>
    </citation>
    <scope>FUNCTION</scope>
    <scope>ROLE OF THE NEAT DOMAINS</scope>
</reference>
<reference key="3">
    <citation type="journal article" date="2007" name="J. Bacteriol.">
        <title>High-affinity binding of the staphylococcal harA protein to haptoglobin and hemoglobin involves a domain with an antiparallel eight-stranded beta-barrel fold.</title>
        <authorList>
            <person name="Dryla A."/>
            <person name="Hoffmann B."/>
            <person name="Gelbmann D."/>
            <person name="Giefing C."/>
            <person name="Hanner M."/>
            <person name="Meinke A."/>
            <person name="Anderson A.S."/>
            <person name="Koppensteiner W."/>
            <person name="Konrat R."/>
            <person name="von Gabain A."/>
            <person name="Nagy E."/>
        </authorList>
    </citation>
    <scope>STRUCTURE BY NMR OF 86-221</scope>
    <scope>BINDING PROPERTIES OF THE NEAT DOMAINS</scope>
</reference>
<gene>
    <name type="primary">isdH</name>
    <name type="synonym">harA</name>
    <name type="synonym">sasI</name>
    <name type="ordered locus">SACOL1781</name>
</gene>
<proteinExistence type="evidence at protein level"/>
<evidence type="ECO:0000255" key="1"/>
<evidence type="ECO:0000255" key="2">
    <source>
        <dbReference type="PROSITE-ProRule" id="PRU00337"/>
    </source>
</evidence>
<evidence type="ECO:0000255" key="3">
    <source>
        <dbReference type="PROSITE-ProRule" id="PRU00477"/>
    </source>
</evidence>
<evidence type="ECO:0000256" key="4">
    <source>
        <dbReference type="SAM" id="MobiDB-lite"/>
    </source>
</evidence>
<evidence type="ECO:0000269" key="5">
    <source>
    </source>
</evidence>
<evidence type="ECO:0000305" key="6"/>
<organism>
    <name type="scientific">Staphylococcus aureus (strain COL)</name>
    <dbReference type="NCBI Taxonomy" id="93062"/>
    <lineage>
        <taxon>Bacteria</taxon>
        <taxon>Bacillati</taxon>
        <taxon>Bacillota</taxon>
        <taxon>Bacilli</taxon>
        <taxon>Bacillales</taxon>
        <taxon>Staphylococcaceae</taxon>
        <taxon>Staphylococcus</taxon>
    </lineage>
</organism>
<comment type="function">
    <text evidence="5">Binds human plasma haptoglobin-hemoglobin complexes, haptoglobin and hemoglobin. Binds haptoglobin-hemoglobin complexes with significantly higher affinity than haptoglobin alone.</text>
</comment>
<comment type="subcellular location">
    <subcellularLocation>
        <location evidence="6">Secreted</location>
        <location evidence="6">Cell wall</location>
        <topology evidence="6">Peptidoglycan-anchor</topology>
    </subcellularLocation>
</comment>
<comment type="domain">
    <text>The NEAT 1 domain is formed by an antiparallel eight-stranded beta-barrel fold. It binds with higher affinity than the NEAT 2 domain haptoglobin-hemoglobin complexes, haptoglobin and hemoglobin.</text>
</comment>
<comment type="similarity">
    <text evidence="6">Belongs to the IsdH family.</text>
</comment>
<keyword id="KW-0134">Cell wall</keyword>
<keyword id="KW-0572">Peptidoglycan-anchor</keyword>
<keyword id="KW-0677">Repeat</keyword>
<keyword id="KW-0964">Secreted</keyword>
<keyword id="KW-0732">Signal</keyword>
<dbReference type="EMBL" id="CP000046">
    <property type="protein sequence ID" value="AAW38309.1"/>
    <property type="molecule type" value="Genomic_DNA"/>
</dbReference>
<dbReference type="RefSeq" id="WP_001032773.1">
    <property type="nucleotide sequence ID" value="NZ_JBGOFO010000008.1"/>
</dbReference>
<dbReference type="BMRB" id="Q5HF43"/>
<dbReference type="SMR" id="Q5HF43"/>
<dbReference type="KEGG" id="sac:SACOL1781"/>
<dbReference type="HOGENOM" id="CLU_016167_1_0_9"/>
<dbReference type="Proteomes" id="UP000000530">
    <property type="component" value="Chromosome"/>
</dbReference>
<dbReference type="GO" id="GO:0005576">
    <property type="term" value="C:extracellular region"/>
    <property type="evidence" value="ECO:0007669"/>
    <property type="project" value="UniProtKB-KW"/>
</dbReference>
<dbReference type="GO" id="GO:0020037">
    <property type="term" value="F:heme binding"/>
    <property type="evidence" value="ECO:0007669"/>
    <property type="project" value="InterPro"/>
</dbReference>
<dbReference type="CDD" id="cd06920">
    <property type="entry name" value="NEAT"/>
    <property type="match status" value="1"/>
</dbReference>
<dbReference type="Gene3D" id="1.20.58.1270">
    <property type="match status" value="1"/>
</dbReference>
<dbReference type="Gene3D" id="2.60.40.1850">
    <property type="match status" value="3"/>
</dbReference>
<dbReference type="InterPro" id="IPR048652">
    <property type="entry name" value="Isd_H_B_linker"/>
</dbReference>
<dbReference type="InterPro" id="IPR050436">
    <property type="entry name" value="IsdA"/>
</dbReference>
<dbReference type="InterPro" id="IPR019930">
    <property type="entry name" value="IsdH"/>
</dbReference>
<dbReference type="InterPro" id="IPR019931">
    <property type="entry name" value="LPXTG_anchor"/>
</dbReference>
<dbReference type="InterPro" id="IPR006635">
    <property type="entry name" value="NEAT_dom"/>
</dbReference>
<dbReference type="InterPro" id="IPR037250">
    <property type="entry name" value="NEAT_dom_sf"/>
</dbReference>
<dbReference type="InterPro" id="IPR005877">
    <property type="entry name" value="YSIRK_signal_dom"/>
</dbReference>
<dbReference type="NCBIfam" id="TIGR03658">
    <property type="entry name" value="IsdH_HarA"/>
    <property type="match status" value="1"/>
</dbReference>
<dbReference type="NCBIfam" id="TIGR01167">
    <property type="entry name" value="LPXTG_anchor"/>
    <property type="match status" value="1"/>
</dbReference>
<dbReference type="NCBIfam" id="TIGR01168">
    <property type="entry name" value="YSIRK_signal"/>
    <property type="match status" value="1"/>
</dbReference>
<dbReference type="PANTHER" id="PTHR37824">
    <property type="entry name" value="IRON-REGULATED SURFACE DETERMINANT PROTEIN C"/>
    <property type="match status" value="1"/>
</dbReference>
<dbReference type="PANTHER" id="PTHR37824:SF1">
    <property type="entry name" value="IRON-REGULATED SURFACE DETERMINANT PROTEIN C"/>
    <property type="match status" value="1"/>
</dbReference>
<dbReference type="Pfam" id="PF20861">
    <property type="entry name" value="Isd_H_B_linker"/>
    <property type="match status" value="1"/>
</dbReference>
<dbReference type="Pfam" id="PF05031">
    <property type="entry name" value="NEAT"/>
    <property type="match status" value="3"/>
</dbReference>
<dbReference type="Pfam" id="PF04650">
    <property type="entry name" value="YSIRK_signal"/>
    <property type="match status" value="1"/>
</dbReference>
<dbReference type="SMART" id="SM00725">
    <property type="entry name" value="NEAT"/>
    <property type="match status" value="3"/>
</dbReference>
<dbReference type="SUPFAM" id="SSF158911">
    <property type="entry name" value="NEAT domain-like"/>
    <property type="match status" value="3"/>
</dbReference>
<dbReference type="PROSITE" id="PS50847">
    <property type="entry name" value="GRAM_POS_ANCHORING"/>
    <property type="match status" value="1"/>
</dbReference>
<dbReference type="PROSITE" id="PS50978">
    <property type="entry name" value="NEAT"/>
    <property type="match status" value="3"/>
</dbReference>
<protein>
    <recommendedName>
        <fullName>Iron-regulated surface determinant protein H</fullName>
    </recommendedName>
    <alternativeName>
        <fullName>Haptoglobin receptor A</fullName>
    </alternativeName>
    <alternativeName>
        <fullName>Staphylococcus aureus surface protein I</fullName>
    </alternativeName>
</protein>
<feature type="signal peptide" evidence="1">
    <location>
        <begin position="1"/>
        <end position="40"/>
    </location>
</feature>
<feature type="chain" id="PRO_0000285183" description="Iron-regulated surface determinant protein H">
    <location>
        <begin position="41"/>
        <end position="864"/>
    </location>
</feature>
<feature type="propeptide" id="PRO_0000285184" description="Removed by sortase" evidence="3">
    <location>
        <begin position="865"/>
        <end position="895"/>
    </location>
</feature>
<feature type="domain" description="NEAT 1" evidence="2">
    <location>
        <begin position="105"/>
        <end position="232"/>
    </location>
</feature>
<feature type="domain" description="NEAT 2" evidence="2">
    <location>
        <begin position="345"/>
        <end position="471"/>
    </location>
</feature>
<feature type="domain" description="NEAT 3" evidence="2">
    <location>
        <begin position="543"/>
        <end position="660"/>
    </location>
</feature>
<feature type="region of interest" description="Disordered" evidence="4">
    <location>
        <begin position="42"/>
        <end position="85"/>
    </location>
</feature>
<feature type="region of interest" description="Disordered" evidence="4">
    <location>
        <begin position="241"/>
        <end position="324"/>
    </location>
</feature>
<feature type="region of interest" description="Disordered" evidence="4">
    <location>
        <begin position="657"/>
        <end position="720"/>
    </location>
</feature>
<feature type="region of interest" description="Disordered" evidence="4">
    <location>
        <begin position="751"/>
        <end position="782"/>
    </location>
</feature>
<feature type="region of interest" description="Disordered" evidence="4">
    <location>
        <begin position="841"/>
        <end position="868"/>
    </location>
</feature>
<feature type="short sequence motif" description="LPXTG sorting signal" evidence="3">
    <location>
        <begin position="861"/>
        <end position="865"/>
    </location>
</feature>
<feature type="compositionally biased region" description="Low complexity" evidence="4">
    <location>
        <begin position="53"/>
        <end position="62"/>
    </location>
</feature>
<feature type="compositionally biased region" description="Polar residues" evidence="4">
    <location>
        <begin position="63"/>
        <end position="81"/>
    </location>
</feature>
<feature type="compositionally biased region" description="Low complexity" evidence="4">
    <location>
        <begin position="243"/>
        <end position="276"/>
    </location>
</feature>
<feature type="compositionally biased region" description="Polar residues" evidence="4">
    <location>
        <begin position="277"/>
        <end position="323"/>
    </location>
</feature>
<feature type="compositionally biased region" description="Polar residues" evidence="4">
    <location>
        <begin position="663"/>
        <end position="677"/>
    </location>
</feature>
<feature type="compositionally biased region" description="Polar residues" evidence="4">
    <location>
        <begin position="687"/>
        <end position="697"/>
    </location>
</feature>
<feature type="compositionally biased region" description="Basic and acidic residues" evidence="4">
    <location>
        <begin position="698"/>
        <end position="720"/>
    </location>
</feature>
<feature type="compositionally biased region" description="Basic and acidic residues" evidence="4">
    <location>
        <begin position="751"/>
        <end position="765"/>
    </location>
</feature>
<feature type="compositionally biased region" description="Basic and acidic residues" evidence="4">
    <location>
        <begin position="841"/>
        <end position="854"/>
    </location>
</feature>
<feature type="compositionally biased region" description="Polar residues" evidence="4">
    <location>
        <begin position="855"/>
        <end position="868"/>
    </location>
</feature>
<feature type="modified residue" description="Pentaglycyl murein peptidoglycan amidated threonine" evidence="3">
    <location>
        <position position="864"/>
    </location>
</feature>
<sequence length="895" mass="100935">MNKHHPKLRSFYSIRKSTLGVASVIVSTLFLITSQHQAQAAENTNTSDKISENQNNNATTTQPPKDTNQTQPATQPANTAKNYPAADESLKDAIKDPALENKEHDIGPREQVNFQLLDKNNETQYYHFFSIKDPADVYYTKKKAEVELDINTASTWKKFEVYENNQKLPVRLVSYSPVPEDHAYIRFPVSDGTQELKIVSSTQIDDGEETNYDYTKLVFAKPIYNDPSLVKSDTNDAVVTNDQSSSVASNQTNTNTSNQNTSTINNANNQPQATTNMSQPAQPKSSTNADQASSQPAHETNSNGNTNDKTNESSNQSDVNQQYPPADESLQDAIKNPAIIDKEHTADNWRPIDFQMKNDKGERQFYHYASTVEPATVIFTKTGPIIELGLKTASTWKKFEVYEGDKKLPVELVSYDSDKDYAYIRFPVSNGTREVKIVSSIEYGENIHEDYDYTLMVFAQPITNNPDDYVDEETYNLQKLLAPYHKAKTLERQVYELEKLQEKLPEKYKAEYKKKLDQTRVELADQVKSAVTEFENVTPTNDQLTDLQEAHFVVFESEENSESVMDGFVEHPFYTATLNGQKYVVMKTKDDSYWKDLIVEGKRVTTVSKDPKNNSRTLIFPYIPDKAVYNAIVKVVVANIGYEGQYHVRIINQDINTKDDDTSQNNTSEPLNVQTGQEGKVADTDVAENSSTATNPKDASDKADVIEPESDVVKDADNNIDKDVQHDVDHLSDMSDNNHFDKYDLKEMDTQIAKDTDRNVDKDADNSVGMSSNVDTDKDSNKNKDKVIQLNHIADKNNHTGKAAKLDVVKQNYNNTDKVTDKKTTEHLPSDIHKTVDKTVKTKEKAGTPSKENKLSQSKMLPKTGETTSSQSWWGLYALLGMLALFIPKFRKESK</sequence>
<name>ISDH_STAAC</name>